<evidence type="ECO:0000255" key="1">
    <source>
        <dbReference type="HAMAP-Rule" id="MF_00302"/>
    </source>
</evidence>
<comment type="function">
    <text evidence="1">Involved in the modulation of the specificity of the ClpAP-mediated ATP-dependent protein degradation.</text>
</comment>
<comment type="subunit">
    <text evidence="1">Binds to the N-terminal domain of the chaperone ClpA.</text>
</comment>
<comment type="similarity">
    <text evidence="1">Belongs to the ClpS family.</text>
</comment>
<name>CLPS_OLEA2</name>
<keyword id="KW-1185">Reference proteome</keyword>
<sequence>MSDRKLSTREDADVLLEEELKEPRRFRVLLHNDDYTSMDFVVAVLIDIFRKSREQAMSIMLSVHEKGIGVCGVYTAEVAETKVAMVHARARAEGFPLRCSMEEV</sequence>
<proteinExistence type="inferred from homology"/>
<dbReference type="EMBL" id="CP000112">
    <property type="protein sequence ID" value="ABB38897.1"/>
    <property type="molecule type" value="Genomic_DNA"/>
</dbReference>
<dbReference type="RefSeq" id="WP_011368001.1">
    <property type="nucleotide sequence ID" value="NC_007519.1"/>
</dbReference>
<dbReference type="SMR" id="Q30ZJ9"/>
<dbReference type="STRING" id="207559.Dde_2100"/>
<dbReference type="KEGG" id="dde:Dde_2100"/>
<dbReference type="eggNOG" id="COG2127">
    <property type="taxonomic scope" value="Bacteria"/>
</dbReference>
<dbReference type="HOGENOM" id="CLU_134358_1_0_7"/>
<dbReference type="Proteomes" id="UP000002710">
    <property type="component" value="Chromosome"/>
</dbReference>
<dbReference type="GO" id="GO:0030163">
    <property type="term" value="P:protein catabolic process"/>
    <property type="evidence" value="ECO:0007669"/>
    <property type="project" value="InterPro"/>
</dbReference>
<dbReference type="GO" id="GO:0006508">
    <property type="term" value="P:proteolysis"/>
    <property type="evidence" value="ECO:0007669"/>
    <property type="project" value="UniProtKB-UniRule"/>
</dbReference>
<dbReference type="FunFam" id="3.30.1390.10:FF:000002">
    <property type="entry name" value="ATP-dependent Clp protease adapter protein ClpS"/>
    <property type="match status" value="1"/>
</dbReference>
<dbReference type="Gene3D" id="3.30.1390.10">
    <property type="match status" value="1"/>
</dbReference>
<dbReference type="HAMAP" id="MF_00302">
    <property type="entry name" value="ClpS"/>
    <property type="match status" value="1"/>
</dbReference>
<dbReference type="InterPro" id="IPR022935">
    <property type="entry name" value="ClpS"/>
</dbReference>
<dbReference type="InterPro" id="IPR003769">
    <property type="entry name" value="ClpS_core"/>
</dbReference>
<dbReference type="InterPro" id="IPR014719">
    <property type="entry name" value="Ribosomal_bL12_C/ClpS-like"/>
</dbReference>
<dbReference type="NCBIfam" id="NF000672">
    <property type="entry name" value="PRK00033.1-5"/>
    <property type="match status" value="1"/>
</dbReference>
<dbReference type="PANTHER" id="PTHR33473:SF19">
    <property type="entry name" value="ATP-DEPENDENT CLP PROTEASE ADAPTER PROTEIN CLPS"/>
    <property type="match status" value="1"/>
</dbReference>
<dbReference type="PANTHER" id="PTHR33473">
    <property type="entry name" value="ATP-DEPENDENT CLP PROTEASE ADAPTER PROTEIN CLPS1, CHLOROPLASTIC"/>
    <property type="match status" value="1"/>
</dbReference>
<dbReference type="Pfam" id="PF02617">
    <property type="entry name" value="ClpS"/>
    <property type="match status" value="1"/>
</dbReference>
<dbReference type="SUPFAM" id="SSF54736">
    <property type="entry name" value="ClpS-like"/>
    <property type="match status" value="1"/>
</dbReference>
<protein>
    <recommendedName>
        <fullName evidence="1">ATP-dependent Clp protease adapter protein ClpS</fullName>
    </recommendedName>
</protein>
<gene>
    <name evidence="1" type="primary">clpS</name>
    <name type="ordered locus">Dde_2100</name>
</gene>
<accession>Q30ZJ9</accession>
<organism>
    <name type="scientific">Oleidesulfovibrio alaskensis (strain ATCC BAA-1058 / DSM 17464 / G20)</name>
    <name type="common">Desulfovibrio alaskensis</name>
    <dbReference type="NCBI Taxonomy" id="207559"/>
    <lineage>
        <taxon>Bacteria</taxon>
        <taxon>Pseudomonadati</taxon>
        <taxon>Thermodesulfobacteriota</taxon>
        <taxon>Desulfovibrionia</taxon>
        <taxon>Desulfovibrionales</taxon>
        <taxon>Desulfovibrionaceae</taxon>
        <taxon>Oleidesulfovibrio</taxon>
    </lineage>
</organism>
<reference key="1">
    <citation type="journal article" date="2011" name="J. Bacteriol.">
        <title>Complete genome sequence and updated annotation of Desulfovibrio alaskensis G20.</title>
        <authorList>
            <person name="Hauser L.J."/>
            <person name="Land M.L."/>
            <person name="Brown S.D."/>
            <person name="Larimer F."/>
            <person name="Keller K.L."/>
            <person name="Rapp-Giles B.J."/>
            <person name="Price M.N."/>
            <person name="Lin M."/>
            <person name="Bruce D.C."/>
            <person name="Detter J.C."/>
            <person name="Tapia R."/>
            <person name="Han C.S."/>
            <person name="Goodwin L.A."/>
            <person name="Cheng J.F."/>
            <person name="Pitluck S."/>
            <person name="Copeland A."/>
            <person name="Lucas S."/>
            <person name="Nolan M."/>
            <person name="Lapidus A.L."/>
            <person name="Palumbo A.V."/>
            <person name="Wall J.D."/>
        </authorList>
    </citation>
    <scope>NUCLEOTIDE SEQUENCE [LARGE SCALE GENOMIC DNA]</scope>
    <source>
        <strain>ATCC BAA-1058 / DSM 17464 / G20</strain>
    </source>
</reference>
<feature type="chain" id="PRO_0000300703" description="ATP-dependent Clp protease adapter protein ClpS">
    <location>
        <begin position="1"/>
        <end position="104"/>
    </location>
</feature>